<evidence type="ECO:0000255" key="1">
    <source>
        <dbReference type="HAMAP-Rule" id="MF_01631"/>
    </source>
</evidence>
<gene>
    <name evidence="1" type="primary">glmU</name>
    <name type="ordered locus">THA_395</name>
</gene>
<sequence length="451" mass="50180">MKTLILAAGLGKRMNSKYPKVIHKILGKPMINWVIDTAKSFGEVGVVLGHKHEMVEKVIPQDVKIFLQNEQLGTAHAVMCGFDFIPEKDNLLILYGDVPFISYETLKRLEKEHIESNSDVTILTAILENPAGYGRIVRGKKIEIVEDKDADEKIKKIKEINTGIYIFKGKFLKENIKKIKNDNAQKEYYLTDILKFTENISTVTTDDIDEVTGVNDRIQLSKLEKNMRKRINEKLMREGVRIIDPESVYIDITVKIGKDTIIYPFTFIEGETEIGEDCVIGPMTRIKDSKIGNNVNVIRSEVEKAIIEDNVSVGPFSRLREGTHLKSNVKIGNFVETKKSVIGKNTKAQHLTYLGDATIGENVNIGAGTITCNYDGVKKHPTIIEDGAFIGSNNSLVAPVKIGKNAITGAGSTITEDVPENSLGLGRARQVVIKDWVLRKKGGNQNADSKE</sequence>
<accession>B7IFM4</accession>
<protein>
    <recommendedName>
        <fullName evidence="1">Bifunctional protein GlmU</fullName>
    </recommendedName>
    <domain>
        <recommendedName>
            <fullName evidence="1">UDP-N-acetylglucosamine pyrophosphorylase</fullName>
            <ecNumber evidence="1">2.7.7.23</ecNumber>
        </recommendedName>
        <alternativeName>
            <fullName evidence="1">N-acetylglucosamine-1-phosphate uridyltransferase</fullName>
        </alternativeName>
    </domain>
    <domain>
        <recommendedName>
            <fullName evidence="1">Glucosamine-1-phosphate N-acetyltransferase</fullName>
            <ecNumber evidence="1">2.3.1.157</ecNumber>
        </recommendedName>
    </domain>
</protein>
<name>GLMU_THEAB</name>
<proteinExistence type="inferred from homology"/>
<organism>
    <name type="scientific">Thermosipho africanus (strain TCF52B)</name>
    <dbReference type="NCBI Taxonomy" id="484019"/>
    <lineage>
        <taxon>Bacteria</taxon>
        <taxon>Thermotogati</taxon>
        <taxon>Thermotogota</taxon>
        <taxon>Thermotogae</taxon>
        <taxon>Thermotogales</taxon>
        <taxon>Fervidobacteriaceae</taxon>
        <taxon>Thermosipho</taxon>
    </lineage>
</organism>
<feature type="chain" id="PRO_1000186504" description="Bifunctional protein GlmU">
    <location>
        <begin position="1"/>
        <end position="451"/>
    </location>
</feature>
<feature type="region of interest" description="Pyrophosphorylase" evidence="1">
    <location>
        <begin position="1"/>
        <end position="217"/>
    </location>
</feature>
<feature type="region of interest" description="Linker" evidence="1">
    <location>
        <begin position="218"/>
        <end position="238"/>
    </location>
</feature>
<feature type="region of interest" description="N-acetyltransferase" evidence="1">
    <location>
        <begin position="239"/>
        <end position="451"/>
    </location>
</feature>
<feature type="active site" description="Proton acceptor" evidence="1">
    <location>
        <position position="350"/>
    </location>
</feature>
<feature type="binding site" evidence="1">
    <location>
        <begin position="6"/>
        <end position="9"/>
    </location>
    <ligand>
        <name>UDP-N-acetyl-alpha-D-glucosamine</name>
        <dbReference type="ChEBI" id="CHEBI:57705"/>
    </ligand>
</feature>
<feature type="binding site" evidence="1">
    <location>
        <position position="20"/>
    </location>
    <ligand>
        <name>UDP-N-acetyl-alpha-D-glucosamine</name>
        <dbReference type="ChEBI" id="CHEBI:57705"/>
    </ligand>
</feature>
<feature type="binding site" evidence="1">
    <location>
        <position position="68"/>
    </location>
    <ligand>
        <name>UDP-N-acetyl-alpha-D-glucosamine</name>
        <dbReference type="ChEBI" id="CHEBI:57705"/>
    </ligand>
</feature>
<feature type="binding site" evidence="1">
    <location>
        <begin position="73"/>
        <end position="74"/>
    </location>
    <ligand>
        <name>UDP-N-acetyl-alpha-D-glucosamine</name>
        <dbReference type="ChEBI" id="CHEBI:57705"/>
    </ligand>
</feature>
<feature type="binding site" evidence="1">
    <location>
        <begin position="95"/>
        <end position="97"/>
    </location>
    <ligand>
        <name>UDP-N-acetyl-alpha-D-glucosamine</name>
        <dbReference type="ChEBI" id="CHEBI:57705"/>
    </ligand>
</feature>
<feature type="binding site" evidence="1">
    <location>
        <position position="97"/>
    </location>
    <ligand>
        <name>Mg(2+)</name>
        <dbReference type="ChEBI" id="CHEBI:18420"/>
    </ligand>
</feature>
<feature type="binding site" evidence="1">
    <location>
        <position position="134"/>
    </location>
    <ligand>
        <name>UDP-N-acetyl-alpha-D-glucosamine</name>
        <dbReference type="ChEBI" id="CHEBI:57705"/>
    </ligand>
</feature>
<feature type="binding site" evidence="1">
    <location>
        <position position="146"/>
    </location>
    <ligand>
        <name>UDP-N-acetyl-alpha-D-glucosamine</name>
        <dbReference type="ChEBI" id="CHEBI:57705"/>
    </ligand>
</feature>
<feature type="binding site" evidence="1">
    <location>
        <position position="161"/>
    </location>
    <ligand>
        <name>UDP-N-acetyl-alpha-D-glucosamine</name>
        <dbReference type="ChEBI" id="CHEBI:57705"/>
    </ligand>
</feature>
<feature type="binding site" evidence="1">
    <location>
        <position position="215"/>
    </location>
    <ligand>
        <name>Mg(2+)</name>
        <dbReference type="ChEBI" id="CHEBI:18420"/>
    </ligand>
</feature>
<feature type="binding site" evidence="1">
    <location>
        <position position="215"/>
    </location>
    <ligand>
        <name>UDP-N-acetyl-alpha-D-glucosamine</name>
        <dbReference type="ChEBI" id="CHEBI:57705"/>
    </ligand>
</feature>
<feature type="binding site" evidence="1">
    <location>
        <position position="320"/>
    </location>
    <ligand>
        <name>UDP-N-acetyl-alpha-D-glucosamine</name>
        <dbReference type="ChEBI" id="CHEBI:57705"/>
    </ligand>
</feature>
<feature type="binding site" evidence="1">
    <location>
        <position position="338"/>
    </location>
    <ligand>
        <name>UDP-N-acetyl-alpha-D-glucosamine</name>
        <dbReference type="ChEBI" id="CHEBI:57705"/>
    </ligand>
</feature>
<feature type="binding site" evidence="1">
    <location>
        <position position="353"/>
    </location>
    <ligand>
        <name>UDP-N-acetyl-alpha-D-glucosamine</name>
        <dbReference type="ChEBI" id="CHEBI:57705"/>
    </ligand>
</feature>
<feature type="binding site" evidence="1">
    <location>
        <position position="364"/>
    </location>
    <ligand>
        <name>UDP-N-acetyl-alpha-D-glucosamine</name>
        <dbReference type="ChEBI" id="CHEBI:57705"/>
    </ligand>
</feature>
<feature type="binding site" evidence="1">
    <location>
        <position position="367"/>
    </location>
    <ligand>
        <name>acetyl-CoA</name>
        <dbReference type="ChEBI" id="CHEBI:57288"/>
    </ligand>
</feature>
<feature type="binding site" evidence="1">
    <location>
        <begin position="373"/>
        <end position="374"/>
    </location>
    <ligand>
        <name>acetyl-CoA</name>
        <dbReference type="ChEBI" id="CHEBI:57288"/>
    </ligand>
</feature>
<feature type="binding site" evidence="1">
    <location>
        <position position="392"/>
    </location>
    <ligand>
        <name>acetyl-CoA</name>
        <dbReference type="ChEBI" id="CHEBI:57288"/>
    </ligand>
</feature>
<feature type="binding site" evidence="1">
    <location>
        <position position="410"/>
    </location>
    <ligand>
        <name>acetyl-CoA</name>
        <dbReference type="ChEBI" id="CHEBI:57288"/>
    </ligand>
</feature>
<feature type="binding site" evidence="1">
    <location>
        <position position="427"/>
    </location>
    <ligand>
        <name>acetyl-CoA</name>
        <dbReference type="ChEBI" id="CHEBI:57288"/>
    </ligand>
</feature>
<keyword id="KW-0012">Acyltransferase</keyword>
<keyword id="KW-0133">Cell shape</keyword>
<keyword id="KW-0961">Cell wall biogenesis/degradation</keyword>
<keyword id="KW-0963">Cytoplasm</keyword>
<keyword id="KW-0460">Magnesium</keyword>
<keyword id="KW-0479">Metal-binding</keyword>
<keyword id="KW-0511">Multifunctional enzyme</keyword>
<keyword id="KW-0548">Nucleotidyltransferase</keyword>
<keyword id="KW-0573">Peptidoglycan synthesis</keyword>
<keyword id="KW-1185">Reference proteome</keyword>
<keyword id="KW-0677">Repeat</keyword>
<keyword id="KW-0808">Transferase</keyword>
<dbReference type="EC" id="2.7.7.23" evidence="1"/>
<dbReference type="EC" id="2.3.1.157" evidence="1"/>
<dbReference type="EMBL" id="CP001185">
    <property type="protein sequence ID" value="ACJ74888.1"/>
    <property type="molecule type" value="Genomic_DNA"/>
</dbReference>
<dbReference type="RefSeq" id="WP_012579545.1">
    <property type="nucleotide sequence ID" value="NC_011653.1"/>
</dbReference>
<dbReference type="SMR" id="B7IFM4"/>
<dbReference type="STRING" id="484019.THA_395"/>
<dbReference type="KEGG" id="taf:THA_395"/>
<dbReference type="eggNOG" id="COG1207">
    <property type="taxonomic scope" value="Bacteria"/>
</dbReference>
<dbReference type="HOGENOM" id="CLU_029499_15_2_0"/>
<dbReference type="OrthoDB" id="9775031at2"/>
<dbReference type="UniPathway" id="UPA00113">
    <property type="reaction ID" value="UER00532"/>
</dbReference>
<dbReference type="UniPathway" id="UPA00113">
    <property type="reaction ID" value="UER00533"/>
</dbReference>
<dbReference type="UniPathway" id="UPA00973"/>
<dbReference type="Proteomes" id="UP000002453">
    <property type="component" value="Chromosome"/>
</dbReference>
<dbReference type="GO" id="GO:0005737">
    <property type="term" value="C:cytoplasm"/>
    <property type="evidence" value="ECO:0007669"/>
    <property type="project" value="UniProtKB-SubCell"/>
</dbReference>
<dbReference type="GO" id="GO:0016020">
    <property type="term" value="C:membrane"/>
    <property type="evidence" value="ECO:0007669"/>
    <property type="project" value="GOC"/>
</dbReference>
<dbReference type="GO" id="GO:0019134">
    <property type="term" value="F:glucosamine-1-phosphate N-acetyltransferase activity"/>
    <property type="evidence" value="ECO:0007669"/>
    <property type="project" value="UniProtKB-UniRule"/>
</dbReference>
<dbReference type="GO" id="GO:0000287">
    <property type="term" value="F:magnesium ion binding"/>
    <property type="evidence" value="ECO:0007669"/>
    <property type="project" value="UniProtKB-UniRule"/>
</dbReference>
<dbReference type="GO" id="GO:0003977">
    <property type="term" value="F:UDP-N-acetylglucosamine diphosphorylase activity"/>
    <property type="evidence" value="ECO:0007669"/>
    <property type="project" value="UniProtKB-UniRule"/>
</dbReference>
<dbReference type="GO" id="GO:0000902">
    <property type="term" value="P:cell morphogenesis"/>
    <property type="evidence" value="ECO:0007669"/>
    <property type="project" value="UniProtKB-UniRule"/>
</dbReference>
<dbReference type="GO" id="GO:0071555">
    <property type="term" value="P:cell wall organization"/>
    <property type="evidence" value="ECO:0007669"/>
    <property type="project" value="UniProtKB-KW"/>
</dbReference>
<dbReference type="GO" id="GO:0009245">
    <property type="term" value="P:lipid A biosynthetic process"/>
    <property type="evidence" value="ECO:0007669"/>
    <property type="project" value="UniProtKB-UniRule"/>
</dbReference>
<dbReference type="GO" id="GO:0009252">
    <property type="term" value="P:peptidoglycan biosynthetic process"/>
    <property type="evidence" value="ECO:0007669"/>
    <property type="project" value="UniProtKB-UniRule"/>
</dbReference>
<dbReference type="GO" id="GO:0008360">
    <property type="term" value="P:regulation of cell shape"/>
    <property type="evidence" value="ECO:0007669"/>
    <property type="project" value="UniProtKB-KW"/>
</dbReference>
<dbReference type="GO" id="GO:0006048">
    <property type="term" value="P:UDP-N-acetylglucosamine biosynthetic process"/>
    <property type="evidence" value="ECO:0007669"/>
    <property type="project" value="UniProtKB-UniPathway"/>
</dbReference>
<dbReference type="CDD" id="cd02540">
    <property type="entry name" value="GT2_GlmU_N_bac"/>
    <property type="match status" value="1"/>
</dbReference>
<dbReference type="CDD" id="cd03353">
    <property type="entry name" value="LbH_GlmU_C"/>
    <property type="match status" value="1"/>
</dbReference>
<dbReference type="Gene3D" id="2.160.10.10">
    <property type="entry name" value="Hexapeptide repeat proteins"/>
    <property type="match status" value="1"/>
</dbReference>
<dbReference type="Gene3D" id="3.90.550.10">
    <property type="entry name" value="Spore Coat Polysaccharide Biosynthesis Protein SpsA, Chain A"/>
    <property type="match status" value="1"/>
</dbReference>
<dbReference type="HAMAP" id="MF_01631">
    <property type="entry name" value="GlmU"/>
    <property type="match status" value="1"/>
</dbReference>
<dbReference type="InterPro" id="IPR005882">
    <property type="entry name" value="Bifunctional_GlmU"/>
</dbReference>
<dbReference type="InterPro" id="IPR050065">
    <property type="entry name" value="GlmU-like"/>
</dbReference>
<dbReference type="InterPro" id="IPR038009">
    <property type="entry name" value="GlmU_C_LbH"/>
</dbReference>
<dbReference type="InterPro" id="IPR001451">
    <property type="entry name" value="Hexapep"/>
</dbReference>
<dbReference type="InterPro" id="IPR025877">
    <property type="entry name" value="MobA-like_NTP_Trfase"/>
</dbReference>
<dbReference type="InterPro" id="IPR029044">
    <property type="entry name" value="Nucleotide-diphossugar_trans"/>
</dbReference>
<dbReference type="InterPro" id="IPR011004">
    <property type="entry name" value="Trimer_LpxA-like_sf"/>
</dbReference>
<dbReference type="NCBIfam" id="TIGR01173">
    <property type="entry name" value="glmU"/>
    <property type="match status" value="1"/>
</dbReference>
<dbReference type="NCBIfam" id="NF010934">
    <property type="entry name" value="PRK14354.1"/>
    <property type="match status" value="1"/>
</dbReference>
<dbReference type="NCBIfam" id="NF010937">
    <property type="entry name" value="PRK14357.1"/>
    <property type="match status" value="1"/>
</dbReference>
<dbReference type="PANTHER" id="PTHR43584:SF3">
    <property type="entry name" value="BIFUNCTIONAL PROTEIN GLMU"/>
    <property type="match status" value="1"/>
</dbReference>
<dbReference type="PANTHER" id="PTHR43584">
    <property type="entry name" value="NUCLEOTIDYL TRANSFERASE"/>
    <property type="match status" value="1"/>
</dbReference>
<dbReference type="Pfam" id="PF00132">
    <property type="entry name" value="Hexapep"/>
    <property type="match status" value="2"/>
</dbReference>
<dbReference type="Pfam" id="PF12804">
    <property type="entry name" value="NTP_transf_3"/>
    <property type="match status" value="1"/>
</dbReference>
<dbReference type="SUPFAM" id="SSF53448">
    <property type="entry name" value="Nucleotide-diphospho-sugar transferases"/>
    <property type="match status" value="1"/>
</dbReference>
<dbReference type="SUPFAM" id="SSF51161">
    <property type="entry name" value="Trimeric LpxA-like enzymes"/>
    <property type="match status" value="1"/>
</dbReference>
<comment type="function">
    <text evidence="1">Catalyzes the last two sequential reactions in the de novo biosynthetic pathway for UDP-N-acetylglucosamine (UDP-GlcNAc). The C-terminal domain catalyzes the transfer of acetyl group from acetyl coenzyme A to glucosamine-1-phosphate (GlcN-1-P) to produce N-acetylglucosamine-1-phosphate (GlcNAc-1-P), which is converted into UDP-GlcNAc by the transfer of uridine 5-monophosphate (from uridine 5-triphosphate), a reaction catalyzed by the N-terminal domain.</text>
</comment>
<comment type="catalytic activity">
    <reaction evidence="1">
        <text>alpha-D-glucosamine 1-phosphate + acetyl-CoA = N-acetyl-alpha-D-glucosamine 1-phosphate + CoA + H(+)</text>
        <dbReference type="Rhea" id="RHEA:13725"/>
        <dbReference type="ChEBI" id="CHEBI:15378"/>
        <dbReference type="ChEBI" id="CHEBI:57287"/>
        <dbReference type="ChEBI" id="CHEBI:57288"/>
        <dbReference type="ChEBI" id="CHEBI:57776"/>
        <dbReference type="ChEBI" id="CHEBI:58516"/>
        <dbReference type="EC" id="2.3.1.157"/>
    </reaction>
</comment>
<comment type="catalytic activity">
    <reaction evidence="1">
        <text>N-acetyl-alpha-D-glucosamine 1-phosphate + UTP + H(+) = UDP-N-acetyl-alpha-D-glucosamine + diphosphate</text>
        <dbReference type="Rhea" id="RHEA:13509"/>
        <dbReference type="ChEBI" id="CHEBI:15378"/>
        <dbReference type="ChEBI" id="CHEBI:33019"/>
        <dbReference type="ChEBI" id="CHEBI:46398"/>
        <dbReference type="ChEBI" id="CHEBI:57705"/>
        <dbReference type="ChEBI" id="CHEBI:57776"/>
        <dbReference type="EC" id="2.7.7.23"/>
    </reaction>
</comment>
<comment type="cofactor">
    <cofactor evidence="1">
        <name>Mg(2+)</name>
        <dbReference type="ChEBI" id="CHEBI:18420"/>
    </cofactor>
    <text evidence="1">Binds 1 Mg(2+) ion per subunit.</text>
</comment>
<comment type="pathway">
    <text evidence="1">Nucleotide-sugar biosynthesis; UDP-N-acetyl-alpha-D-glucosamine biosynthesis; N-acetyl-alpha-D-glucosamine 1-phosphate from alpha-D-glucosamine 6-phosphate (route II): step 2/2.</text>
</comment>
<comment type="pathway">
    <text evidence="1">Nucleotide-sugar biosynthesis; UDP-N-acetyl-alpha-D-glucosamine biosynthesis; UDP-N-acetyl-alpha-D-glucosamine from N-acetyl-alpha-D-glucosamine 1-phosphate: step 1/1.</text>
</comment>
<comment type="pathway">
    <text evidence="1">Bacterial outer membrane biogenesis; LPS lipid A biosynthesis.</text>
</comment>
<comment type="subunit">
    <text evidence="1">Homotrimer.</text>
</comment>
<comment type="subcellular location">
    <subcellularLocation>
        <location evidence="1">Cytoplasm</location>
    </subcellularLocation>
</comment>
<comment type="similarity">
    <text evidence="1">In the N-terminal section; belongs to the N-acetylglucosamine-1-phosphate uridyltransferase family.</text>
</comment>
<comment type="similarity">
    <text evidence="1">In the C-terminal section; belongs to the transferase hexapeptide repeat family.</text>
</comment>
<reference key="1">
    <citation type="journal article" date="2009" name="J. Bacteriol.">
        <title>The genome of Thermosipho africanus TCF52B: lateral genetic connections to the Firmicutes and Archaea.</title>
        <authorList>
            <person name="Nesboe C.L."/>
            <person name="Bapteste E."/>
            <person name="Curtis B."/>
            <person name="Dahle H."/>
            <person name="Lopez P."/>
            <person name="Macleod D."/>
            <person name="Dlutek M."/>
            <person name="Bowman S."/>
            <person name="Zhaxybayeva O."/>
            <person name="Birkeland N.-K."/>
            <person name="Doolittle W.F."/>
        </authorList>
    </citation>
    <scope>NUCLEOTIDE SEQUENCE [LARGE SCALE GENOMIC DNA]</scope>
    <source>
        <strain>TCF52B</strain>
    </source>
</reference>